<feature type="chain" id="PRO_0000320756" description="Protein translocase subunit SecA">
    <location>
        <begin position="1"/>
        <end position="931"/>
    </location>
</feature>
<feature type="binding site" evidence="1">
    <location>
        <position position="87"/>
    </location>
    <ligand>
        <name>ATP</name>
        <dbReference type="ChEBI" id="CHEBI:30616"/>
    </ligand>
</feature>
<feature type="binding site" evidence="1">
    <location>
        <begin position="105"/>
        <end position="109"/>
    </location>
    <ligand>
        <name>ATP</name>
        <dbReference type="ChEBI" id="CHEBI:30616"/>
    </ligand>
</feature>
<feature type="binding site" evidence="1">
    <location>
        <position position="515"/>
    </location>
    <ligand>
        <name>ATP</name>
        <dbReference type="ChEBI" id="CHEBI:30616"/>
    </ligand>
</feature>
<feature type="binding site" evidence="1">
    <location>
        <position position="915"/>
    </location>
    <ligand>
        <name>Zn(2+)</name>
        <dbReference type="ChEBI" id="CHEBI:29105"/>
    </ligand>
</feature>
<feature type="binding site" evidence="1">
    <location>
        <position position="917"/>
    </location>
    <ligand>
        <name>Zn(2+)</name>
        <dbReference type="ChEBI" id="CHEBI:29105"/>
    </ligand>
</feature>
<feature type="binding site" evidence="1">
    <location>
        <position position="926"/>
    </location>
    <ligand>
        <name>Zn(2+)</name>
        <dbReference type="ChEBI" id="CHEBI:29105"/>
    </ligand>
</feature>
<feature type="binding site" evidence="1">
    <location>
        <position position="927"/>
    </location>
    <ligand>
        <name>Zn(2+)</name>
        <dbReference type="ChEBI" id="CHEBI:29105"/>
    </ligand>
</feature>
<dbReference type="EC" id="7.4.2.8" evidence="1"/>
<dbReference type="EMBL" id="CP000570">
    <property type="protein sequence ID" value="ABN84411.1"/>
    <property type="molecule type" value="Genomic_DNA"/>
</dbReference>
<dbReference type="RefSeq" id="WP_004194125.1">
    <property type="nucleotide sequence ID" value="NC_009074.1"/>
</dbReference>
<dbReference type="SMR" id="A3NDV4"/>
<dbReference type="GeneID" id="92980233"/>
<dbReference type="KEGG" id="bpd:BURPS668_3515"/>
<dbReference type="HOGENOM" id="CLU_005314_3_0_4"/>
<dbReference type="GO" id="GO:0031522">
    <property type="term" value="C:cell envelope Sec protein transport complex"/>
    <property type="evidence" value="ECO:0007669"/>
    <property type="project" value="TreeGrafter"/>
</dbReference>
<dbReference type="GO" id="GO:0005829">
    <property type="term" value="C:cytosol"/>
    <property type="evidence" value="ECO:0007669"/>
    <property type="project" value="TreeGrafter"/>
</dbReference>
<dbReference type="GO" id="GO:0005886">
    <property type="term" value="C:plasma membrane"/>
    <property type="evidence" value="ECO:0007669"/>
    <property type="project" value="UniProtKB-SubCell"/>
</dbReference>
<dbReference type="GO" id="GO:0005524">
    <property type="term" value="F:ATP binding"/>
    <property type="evidence" value="ECO:0007669"/>
    <property type="project" value="UniProtKB-UniRule"/>
</dbReference>
<dbReference type="GO" id="GO:0046872">
    <property type="term" value="F:metal ion binding"/>
    <property type="evidence" value="ECO:0007669"/>
    <property type="project" value="UniProtKB-KW"/>
</dbReference>
<dbReference type="GO" id="GO:0008564">
    <property type="term" value="F:protein-exporting ATPase activity"/>
    <property type="evidence" value="ECO:0007669"/>
    <property type="project" value="UniProtKB-EC"/>
</dbReference>
<dbReference type="GO" id="GO:0065002">
    <property type="term" value="P:intracellular protein transmembrane transport"/>
    <property type="evidence" value="ECO:0007669"/>
    <property type="project" value="UniProtKB-UniRule"/>
</dbReference>
<dbReference type="GO" id="GO:0017038">
    <property type="term" value="P:protein import"/>
    <property type="evidence" value="ECO:0007669"/>
    <property type="project" value="InterPro"/>
</dbReference>
<dbReference type="GO" id="GO:0006605">
    <property type="term" value="P:protein targeting"/>
    <property type="evidence" value="ECO:0007669"/>
    <property type="project" value="UniProtKB-UniRule"/>
</dbReference>
<dbReference type="GO" id="GO:0043952">
    <property type="term" value="P:protein transport by the Sec complex"/>
    <property type="evidence" value="ECO:0007669"/>
    <property type="project" value="TreeGrafter"/>
</dbReference>
<dbReference type="CDD" id="cd17928">
    <property type="entry name" value="DEXDc_SecA"/>
    <property type="match status" value="1"/>
</dbReference>
<dbReference type="CDD" id="cd18803">
    <property type="entry name" value="SF2_C_secA"/>
    <property type="match status" value="1"/>
</dbReference>
<dbReference type="FunFam" id="3.40.50.300:FF:000081">
    <property type="entry name" value="Preprotein translocase subunit SecA"/>
    <property type="match status" value="1"/>
</dbReference>
<dbReference type="FunFam" id="3.40.50.300:FF:000113">
    <property type="entry name" value="Preprotein translocase subunit SecA"/>
    <property type="match status" value="1"/>
</dbReference>
<dbReference type="FunFam" id="3.90.1440.10:FF:000001">
    <property type="entry name" value="Preprotein translocase subunit SecA"/>
    <property type="match status" value="1"/>
</dbReference>
<dbReference type="FunFam" id="1.10.3060.10:FF:000003">
    <property type="entry name" value="Protein translocase subunit SecA"/>
    <property type="match status" value="1"/>
</dbReference>
<dbReference type="Gene3D" id="1.10.3060.10">
    <property type="entry name" value="Helical scaffold and wing domains of SecA"/>
    <property type="match status" value="1"/>
</dbReference>
<dbReference type="Gene3D" id="3.40.50.300">
    <property type="entry name" value="P-loop containing nucleotide triphosphate hydrolases"/>
    <property type="match status" value="2"/>
</dbReference>
<dbReference type="Gene3D" id="3.90.1440.10">
    <property type="entry name" value="SecA, preprotein cross-linking domain"/>
    <property type="match status" value="1"/>
</dbReference>
<dbReference type="HAMAP" id="MF_01382">
    <property type="entry name" value="SecA"/>
    <property type="match status" value="1"/>
</dbReference>
<dbReference type="InterPro" id="IPR014001">
    <property type="entry name" value="Helicase_ATP-bd"/>
</dbReference>
<dbReference type="InterPro" id="IPR001650">
    <property type="entry name" value="Helicase_C-like"/>
</dbReference>
<dbReference type="InterPro" id="IPR027417">
    <property type="entry name" value="P-loop_NTPase"/>
</dbReference>
<dbReference type="InterPro" id="IPR004027">
    <property type="entry name" value="SEC_C_motif"/>
</dbReference>
<dbReference type="InterPro" id="IPR000185">
    <property type="entry name" value="SecA"/>
</dbReference>
<dbReference type="InterPro" id="IPR020937">
    <property type="entry name" value="SecA_CS"/>
</dbReference>
<dbReference type="InterPro" id="IPR011115">
    <property type="entry name" value="SecA_DEAD"/>
</dbReference>
<dbReference type="InterPro" id="IPR014018">
    <property type="entry name" value="SecA_motor_DEAD"/>
</dbReference>
<dbReference type="InterPro" id="IPR011130">
    <property type="entry name" value="SecA_preprotein_X-link_dom"/>
</dbReference>
<dbReference type="InterPro" id="IPR044722">
    <property type="entry name" value="SecA_SF2_C"/>
</dbReference>
<dbReference type="InterPro" id="IPR011116">
    <property type="entry name" value="SecA_Wing/Scaffold"/>
</dbReference>
<dbReference type="InterPro" id="IPR036266">
    <property type="entry name" value="SecA_Wing/Scaffold_sf"/>
</dbReference>
<dbReference type="InterPro" id="IPR036670">
    <property type="entry name" value="SecA_X-link_sf"/>
</dbReference>
<dbReference type="NCBIfam" id="NF009538">
    <property type="entry name" value="PRK12904.1"/>
    <property type="match status" value="1"/>
</dbReference>
<dbReference type="NCBIfam" id="TIGR00963">
    <property type="entry name" value="secA"/>
    <property type="match status" value="1"/>
</dbReference>
<dbReference type="PANTHER" id="PTHR30612:SF0">
    <property type="entry name" value="CHLOROPLAST PROTEIN-TRANSPORTING ATPASE"/>
    <property type="match status" value="1"/>
</dbReference>
<dbReference type="PANTHER" id="PTHR30612">
    <property type="entry name" value="SECA INNER MEMBRANE COMPONENT OF SEC PROTEIN SECRETION SYSTEM"/>
    <property type="match status" value="1"/>
</dbReference>
<dbReference type="Pfam" id="PF21090">
    <property type="entry name" value="P-loop_SecA"/>
    <property type="match status" value="1"/>
</dbReference>
<dbReference type="Pfam" id="PF02810">
    <property type="entry name" value="SEC-C"/>
    <property type="match status" value="1"/>
</dbReference>
<dbReference type="Pfam" id="PF07517">
    <property type="entry name" value="SecA_DEAD"/>
    <property type="match status" value="1"/>
</dbReference>
<dbReference type="Pfam" id="PF01043">
    <property type="entry name" value="SecA_PP_bind"/>
    <property type="match status" value="1"/>
</dbReference>
<dbReference type="Pfam" id="PF07516">
    <property type="entry name" value="SecA_SW"/>
    <property type="match status" value="1"/>
</dbReference>
<dbReference type="PRINTS" id="PR00906">
    <property type="entry name" value="SECA"/>
</dbReference>
<dbReference type="SMART" id="SM00957">
    <property type="entry name" value="SecA_DEAD"/>
    <property type="match status" value="1"/>
</dbReference>
<dbReference type="SMART" id="SM00958">
    <property type="entry name" value="SecA_PP_bind"/>
    <property type="match status" value="1"/>
</dbReference>
<dbReference type="SUPFAM" id="SSF81886">
    <property type="entry name" value="Helical scaffold and wing domains of SecA"/>
    <property type="match status" value="1"/>
</dbReference>
<dbReference type="SUPFAM" id="SSF52540">
    <property type="entry name" value="P-loop containing nucleoside triphosphate hydrolases"/>
    <property type="match status" value="2"/>
</dbReference>
<dbReference type="SUPFAM" id="SSF81767">
    <property type="entry name" value="Pre-protein crosslinking domain of SecA"/>
    <property type="match status" value="1"/>
</dbReference>
<dbReference type="PROSITE" id="PS01312">
    <property type="entry name" value="SECA"/>
    <property type="match status" value="1"/>
</dbReference>
<dbReference type="PROSITE" id="PS51196">
    <property type="entry name" value="SECA_MOTOR_DEAD"/>
    <property type="match status" value="1"/>
</dbReference>
<name>SECA_BURP6</name>
<accession>A3NDV4</accession>
<sequence length="931" mass="104385">MTTGFLQKIFGSRNQRLVKQYQKTVAAINALETQIETLTDDQLRGKTGEFRQRIAAGESLDKLLPEAFAVCREASRRVLKMRHFDVQMIGGMVLHYGKIAEMRTGEGKTLVATLAAYLNALAGRGVHVVTVNDYLAQRDAEWMGRLYNFLGLSVGINLSGMEHDQKQAAYAADITYGTNNEFGFDYLRDNMVYETDSRVQRPLNFAVVDEVDSILIDEARTPLIISGQAEDHTELYVRMNALPPLLERQIGEEKADGTGVEKPGDYTLDEKGRQVFLTESGHEKAERMLAEWGLIGDGESLYAPQNITLMHHVYAALRAHTLFHRDQHYVVQNDEVIIVDEFTGRLMPGRRWSDGLHQAVEAKEHVKIQSENQTLASITFQNYFRMYAKLSGMTGTADTEAYEFNEIYGLETVVIPTNRPPKRIDKQDQIYKTAKERYDAVIRDIRECHERGQPVLVGTTSIENSELLSHLLKQAGLPHEVLNAKQHAREAAIVAEAGRPKRITIATNMAGRGTDIVLGGNVEKQAAFIEADESIPADEKARRIQQLHDEWETLHEQVKTAGGLHIIGTERHESRRIDNQLRGRAGRQGDPGSSRFYLSLEDPLLRIFAGDRVRAIMDRLKMPEGEAIEAGIVTRSIESAQRKVEARNFDIRKQLLEYDDVSNDQRKVIYQQRNELLEAHDIAETIGAMRHGVISEVVRQFVPAGSIEEQWDLPELEETLRNDWQLDLAIQEMVNESSSINADEILDAVTTAADEHYEAKVALVGRESFSAFERSIMLQTLDRLWREHLAALDHLRQGIHLRGYAQKNPKQEYKREAFELFAAMLDAVKQEVTRIVMNVQIQSPEQLEEAAEQIEEQGGQLGNVEFQHADFAAAAAAATAGGAVVADATAEMVGHAMSHSGPAGEVPRVGRNDPCPCGSGKKYKHCHGKLN</sequence>
<organism>
    <name type="scientific">Burkholderia pseudomallei (strain 668)</name>
    <dbReference type="NCBI Taxonomy" id="320373"/>
    <lineage>
        <taxon>Bacteria</taxon>
        <taxon>Pseudomonadati</taxon>
        <taxon>Pseudomonadota</taxon>
        <taxon>Betaproteobacteria</taxon>
        <taxon>Burkholderiales</taxon>
        <taxon>Burkholderiaceae</taxon>
        <taxon>Burkholderia</taxon>
        <taxon>pseudomallei group</taxon>
    </lineage>
</organism>
<gene>
    <name evidence="1" type="primary">secA</name>
    <name type="ordered locus">BURPS668_3515</name>
</gene>
<evidence type="ECO:0000255" key="1">
    <source>
        <dbReference type="HAMAP-Rule" id="MF_01382"/>
    </source>
</evidence>
<protein>
    <recommendedName>
        <fullName evidence="1">Protein translocase subunit SecA</fullName>
        <ecNumber evidence="1">7.4.2.8</ecNumber>
    </recommendedName>
</protein>
<keyword id="KW-0067">ATP-binding</keyword>
<keyword id="KW-0997">Cell inner membrane</keyword>
<keyword id="KW-1003">Cell membrane</keyword>
<keyword id="KW-0963">Cytoplasm</keyword>
<keyword id="KW-0472">Membrane</keyword>
<keyword id="KW-0479">Metal-binding</keyword>
<keyword id="KW-0547">Nucleotide-binding</keyword>
<keyword id="KW-0653">Protein transport</keyword>
<keyword id="KW-1278">Translocase</keyword>
<keyword id="KW-0811">Translocation</keyword>
<keyword id="KW-0813">Transport</keyword>
<keyword id="KW-0862">Zinc</keyword>
<proteinExistence type="inferred from homology"/>
<comment type="function">
    <text evidence="1">Part of the Sec protein translocase complex. Interacts with the SecYEG preprotein conducting channel. Has a central role in coupling the hydrolysis of ATP to the transfer of proteins into and across the cell membrane, serving both as a receptor for the preprotein-SecB complex and as an ATP-driven molecular motor driving the stepwise translocation of polypeptide chains across the membrane.</text>
</comment>
<comment type="catalytic activity">
    <reaction evidence="1">
        <text>ATP + H2O + cellular proteinSide 1 = ADP + phosphate + cellular proteinSide 2.</text>
        <dbReference type="EC" id="7.4.2.8"/>
    </reaction>
</comment>
<comment type="cofactor">
    <cofactor evidence="1">
        <name>Zn(2+)</name>
        <dbReference type="ChEBI" id="CHEBI:29105"/>
    </cofactor>
    <text evidence="1">May bind 1 zinc ion per subunit.</text>
</comment>
<comment type="subunit">
    <text evidence="1">Monomer and homodimer. Part of the essential Sec protein translocation apparatus which comprises SecA, SecYEG and auxiliary proteins SecDF-YajC and YidC.</text>
</comment>
<comment type="subcellular location">
    <subcellularLocation>
        <location evidence="1">Cell inner membrane</location>
        <topology evidence="1">Peripheral membrane protein</topology>
        <orientation evidence="1">Cytoplasmic side</orientation>
    </subcellularLocation>
    <subcellularLocation>
        <location evidence="1">Cytoplasm</location>
    </subcellularLocation>
    <text evidence="1">Distribution is 50-50.</text>
</comment>
<comment type="similarity">
    <text evidence="1">Belongs to the SecA family.</text>
</comment>
<reference key="1">
    <citation type="journal article" date="2010" name="Genome Biol. Evol.">
        <title>Continuing evolution of Burkholderia mallei through genome reduction and large-scale rearrangements.</title>
        <authorList>
            <person name="Losada L."/>
            <person name="Ronning C.M."/>
            <person name="DeShazer D."/>
            <person name="Woods D."/>
            <person name="Fedorova N."/>
            <person name="Kim H.S."/>
            <person name="Shabalina S.A."/>
            <person name="Pearson T.R."/>
            <person name="Brinkac L."/>
            <person name="Tan P."/>
            <person name="Nandi T."/>
            <person name="Crabtree J."/>
            <person name="Badger J."/>
            <person name="Beckstrom-Sternberg S."/>
            <person name="Saqib M."/>
            <person name="Schutzer S.E."/>
            <person name="Keim P."/>
            <person name="Nierman W.C."/>
        </authorList>
    </citation>
    <scope>NUCLEOTIDE SEQUENCE [LARGE SCALE GENOMIC DNA]</scope>
    <source>
        <strain>668</strain>
    </source>
</reference>